<comment type="function">
    <text evidence="1">Extracellular metalloprotease that contributes to pathogenicity.</text>
</comment>
<comment type="cofactor">
    <cofactor evidence="3">
        <name>Zn(2+)</name>
        <dbReference type="ChEBI" id="CHEBI:29105"/>
    </cofactor>
</comment>
<comment type="subcellular location">
    <subcellularLocation>
        <location evidence="1">Secreted</location>
    </subcellularLocation>
</comment>
<comment type="similarity">
    <text evidence="5">Belongs to the peptidase M14 family.</text>
</comment>
<comment type="sequence caution" evidence="5">
    <conflict type="erroneous gene model prediction">
        <sequence resource="EMBL-CDS" id="EFE43078"/>
    </conflict>
</comment>
<organism>
    <name type="scientific">Trichophyton verrucosum (strain HKI 0517)</name>
    <dbReference type="NCBI Taxonomy" id="663202"/>
    <lineage>
        <taxon>Eukaryota</taxon>
        <taxon>Fungi</taxon>
        <taxon>Dikarya</taxon>
        <taxon>Ascomycota</taxon>
        <taxon>Pezizomycotina</taxon>
        <taxon>Eurotiomycetes</taxon>
        <taxon>Eurotiomycetidae</taxon>
        <taxon>Onygenales</taxon>
        <taxon>Arthrodermataceae</taxon>
        <taxon>Trichophyton</taxon>
    </lineage>
</organism>
<dbReference type="EC" id="3.4.17.-"/>
<dbReference type="EMBL" id="ACYE01000116">
    <property type="protein sequence ID" value="EFE43078.1"/>
    <property type="status" value="ALT_SEQ"/>
    <property type="molecule type" value="Genomic_DNA"/>
</dbReference>
<dbReference type="RefSeq" id="XP_003023696.1">
    <property type="nucleotide sequence ID" value="XM_003023650.1"/>
</dbReference>
<dbReference type="SMR" id="D4D4Z1"/>
<dbReference type="GlyCosmos" id="D4D4Z1">
    <property type="glycosylation" value="4 sites, No reported glycans"/>
</dbReference>
<dbReference type="GeneID" id="9582248"/>
<dbReference type="KEGG" id="tve:TRV_02159"/>
<dbReference type="HOGENOM" id="CLU_026103_1_0_1"/>
<dbReference type="OrthoDB" id="2781at34384"/>
<dbReference type="Proteomes" id="UP000008383">
    <property type="component" value="Unassembled WGS sequence"/>
</dbReference>
<dbReference type="GO" id="GO:0005576">
    <property type="term" value="C:extracellular region"/>
    <property type="evidence" value="ECO:0007669"/>
    <property type="project" value="UniProtKB-SubCell"/>
</dbReference>
<dbReference type="GO" id="GO:0004181">
    <property type="term" value="F:metallocarboxypeptidase activity"/>
    <property type="evidence" value="ECO:0007669"/>
    <property type="project" value="InterPro"/>
</dbReference>
<dbReference type="GO" id="GO:0008270">
    <property type="term" value="F:zinc ion binding"/>
    <property type="evidence" value="ECO:0007669"/>
    <property type="project" value="InterPro"/>
</dbReference>
<dbReference type="GO" id="GO:0006508">
    <property type="term" value="P:proteolysis"/>
    <property type="evidence" value="ECO:0007669"/>
    <property type="project" value="UniProtKB-KW"/>
</dbReference>
<dbReference type="CDD" id="cd06242">
    <property type="entry name" value="M14-like"/>
    <property type="match status" value="1"/>
</dbReference>
<dbReference type="Gene3D" id="3.40.630.10">
    <property type="entry name" value="Zn peptidases"/>
    <property type="match status" value="1"/>
</dbReference>
<dbReference type="InterPro" id="IPR000834">
    <property type="entry name" value="Peptidase_M14"/>
</dbReference>
<dbReference type="PANTHER" id="PTHR11705:SF83">
    <property type="entry name" value="INACTIVE METALLOCARBOXYPEPTIDASE ECM14"/>
    <property type="match status" value="1"/>
</dbReference>
<dbReference type="PANTHER" id="PTHR11705">
    <property type="entry name" value="PROTEASE FAMILY M14 CARBOXYPEPTIDASE A,B"/>
    <property type="match status" value="1"/>
</dbReference>
<dbReference type="Pfam" id="PF00246">
    <property type="entry name" value="Peptidase_M14"/>
    <property type="match status" value="1"/>
</dbReference>
<dbReference type="SUPFAM" id="SSF53187">
    <property type="entry name" value="Zn-dependent exopeptidases"/>
    <property type="match status" value="1"/>
</dbReference>
<dbReference type="PROSITE" id="PS52035">
    <property type="entry name" value="PEPTIDASE_M14"/>
    <property type="match status" value="1"/>
</dbReference>
<name>MCPB_TRIVH</name>
<accession>D4D4Z1</accession>
<feature type="signal peptide" evidence="2">
    <location>
        <begin position="1"/>
        <end position="21"/>
    </location>
</feature>
<feature type="chain" id="PRO_0000397763" description="Probable carboxypeptidase 2">
    <location>
        <begin position="22"/>
        <end position="518"/>
    </location>
</feature>
<feature type="domain" description="Peptidase M14" evidence="3">
    <location>
        <begin position="71"/>
        <end position="351"/>
    </location>
</feature>
<feature type="region of interest" description="Disordered" evidence="4">
    <location>
        <begin position="53"/>
        <end position="76"/>
    </location>
</feature>
<feature type="active site" description="Proton donor/acceptor" evidence="3">
    <location>
        <position position="322"/>
    </location>
</feature>
<feature type="binding site" evidence="3">
    <location>
        <position position="136"/>
    </location>
    <ligand>
        <name>Zn(2+)</name>
        <dbReference type="ChEBI" id="CHEBI:29105"/>
        <note>catalytic</note>
    </ligand>
</feature>
<feature type="binding site" evidence="3">
    <location>
        <position position="139"/>
    </location>
    <ligand>
        <name>Zn(2+)</name>
        <dbReference type="ChEBI" id="CHEBI:29105"/>
        <note>catalytic</note>
    </ligand>
</feature>
<feature type="binding site" evidence="3">
    <location>
        <position position="224"/>
    </location>
    <ligand>
        <name>Zn(2+)</name>
        <dbReference type="ChEBI" id="CHEBI:29105"/>
        <note>catalytic</note>
    </ligand>
</feature>
<feature type="glycosylation site" description="N-linked (GlcNAc...) asparagine" evidence="2">
    <location>
        <position position="46"/>
    </location>
</feature>
<feature type="glycosylation site" description="N-linked (GlcNAc...) asparagine" evidence="2">
    <location>
        <position position="116"/>
    </location>
</feature>
<feature type="glycosylation site" description="N-linked (GlcNAc...) asparagine" evidence="2">
    <location>
        <position position="393"/>
    </location>
</feature>
<feature type="glycosylation site" description="N-linked (GlcNAc...) asparagine" evidence="2">
    <location>
        <position position="459"/>
    </location>
</feature>
<reference key="1">
    <citation type="journal article" date="2011" name="Genome Biol.">
        <title>Comparative and functional genomics provide insights into the pathogenicity of dermatophytic fungi.</title>
        <authorList>
            <person name="Burmester A."/>
            <person name="Shelest E."/>
            <person name="Gloeckner G."/>
            <person name="Heddergott C."/>
            <person name="Schindler S."/>
            <person name="Staib P."/>
            <person name="Heidel A."/>
            <person name="Felder M."/>
            <person name="Petzold A."/>
            <person name="Szafranski K."/>
            <person name="Feuermann M."/>
            <person name="Pedruzzi I."/>
            <person name="Priebe S."/>
            <person name="Groth M."/>
            <person name="Winkler R."/>
            <person name="Li W."/>
            <person name="Kniemeyer O."/>
            <person name="Schroeckh V."/>
            <person name="Hertweck C."/>
            <person name="Hube B."/>
            <person name="White T.C."/>
            <person name="Platzer M."/>
            <person name="Guthke R."/>
            <person name="Heitman J."/>
            <person name="Woestemeyer J."/>
            <person name="Zipfel P.F."/>
            <person name="Monod M."/>
            <person name="Brakhage A.A."/>
        </authorList>
    </citation>
    <scope>NUCLEOTIDE SEQUENCE [LARGE SCALE GENOMIC DNA]</scope>
    <source>
        <strain>HKI 0517</strain>
    </source>
</reference>
<evidence type="ECO:0000250" key="1"/>
<evidence type="ECO:0000255" key="2"/>
<evidence type="ECO:0000255" key="3">
    <source>
        <dbReference type="PROSITE-ProRule" id="PRU01379"/>
    </source>
</evidence>
<evidence type="ECO:0000256" key="4">
    <source>
        <dbReference type="SAM" id="MobiDB-lite"/>
    </source>
</evidence>
<evidence type="ECO:0000305" key="5"/>
<sequence>MVAYHLLTLISLGLGSHCASALQYGYNQLSTHKDSAVVAGAFPAINGTHLQSPAFTSPGTVPRGFSDGTSGPTRDETMEGFMRRLARSNSWMAYHEADFKSEEGRKFPYMYLSASNSSVENPSSRKLRVWLQGGVHGNEPAGDQSMLALLGDLAANQKWAAKLLEKMDILVLPRYNPDGVFYFQRYLATNFDPNRDHIKLARQQTRDIKELFARFSPHIATDMHEFTAGRTFGPKRDIIYAADALFSAAKNLNIDEGIRQLSEELFAKRMGKDIEAAGLRWDPYITLGESSSSKLLLLEAGTDAKIGRNAMGLSQCVVFLCETRGIGIAGQHFERRTLSGLVMAKSILQTAVDNFDEVYNTIERGIRRFTNSRNDIVLSDKSPVMERTFGMLNITDASLFDYPIDFATTTPAEAVLTRSRPRAYLIPPSWPDIVKRLEVFGVKADKLPYSYVGPVEALNVTSVTFDKEYYEGVVTTTVETKLVERNIRLPAGSYLVKTNQKNAALAFVSLEVRTLYPF</sequence>
<protein>
    <recommendedName>
        <fullName>Probable carboxypeptidase 2</fullName>
        <ecNumber>3.4.17.-</ecNumber>
    </recommendedName>
    <alternativeName>
        <fullName>Carboxypeptidase M14B</fullName>
    </alternativeName>
    <alternativeName>
        <fullName>Carboxypeptidase MCPB</fullName>
    </alternativeName>
</protein>
<proteinExistence type="inferred from homology"/>
<keyword id="KW-0121">Carboxypeptidase</keyword>
<keyword id="KW-0325">Glycoprotein</keyword>
<keyword id="KW-0378">Hydrolase</keyword>
<keyword id="KW-0645">Protease</keyword>
<keyword id="KW-0964">Secreted</keyword>
<keyword id="KW-0732">Signal</keyword>
<keyword id="KW-0843">Virulence</keyword>
<gene>
    <name type="primary">MCPB</name>
    <name type="ORF">TRV_02159</name>
</gene>